<reference key="1">
    <citation type="journal article" date="2006" name="Proc. Natl. Acad. Sci. U.S.A.">
        <title>Comparative genomics of the lactic acid bacteria.</title>
        <authorList>
            <person name="Makarova K.S."/>
            <person name="Slesarev A."/>
            <person name="Wolf Y.I."/>
            <person name="Sorokin A."/>
            <person name="Mirkin B."/>
            <person name="Koonin E.V."/>
            <person name="Pavlov A."/>
            <person name="Pavlova N."/>
            <person name="Karamychev V."/>
            <person name="Polouchine N."/>
            <person name="Shakhova V."/>
            <person name="Grigoriev I."/>
            <person name="Lou Y."/>
            <person name="Rohksar D."/>
            <person name="Lucas S."/>
            <person name="Huang K."/>
            <person name="Goodstein D.M."/>
            <person name="Hawkins T."/>
            <person name="Plengvidhya V."/>
            <person name="Welker D."/>
            <person name="Hughes J."/>
            <person name="Goh Y."/>
            <person name="Benson A."/>
            <person name="Baldwin K."/>
            <person name="Lee J.-H."/>
            <person name="Diaz-Muniz I."/>
            <person name="Dosti B."/>
            <person name="Smeianov V."/>
            <person name="Wechter W."/>
            <person name="Barabote R."/>
            <person name="Lorca G."/>
            <person name="Altermann E."/>
            <person name="Barrangou R."/>
            <person name="Ganesan B."/>
            <person name="Xie Y."/>
            <person name="Rawsthorne H."/>
            <person name="Tamir D."/>
            <person name="Parker C."/>
            <person name="Breidt F."/>
            <person name="Broadbent J.R."/>
            <person name="Hutkins R."/>
            <person name="O'Sullivan D."/>
            <person name="Steele J."/>
            <person name="Unlu G."/>
            <person name="Saier M.H. Jr."/>
            <person name="Klaenhammer T."/>
            <person name="Richardson P."/>
            <person name="Kozyavkin S."/>
            <person name="Weimer B.C."/>
            <person name="Mills D.A."/>
        </authorList>
    </citation>
    <scope>NUCLEOTIDE SEQUENCE [LARGE SCALE GENOMIC DNA]</scope>
    <source>
        <strain>ATCC BAA-365 / Lb-18</strain>
    </source>
</reference>
<keyword id="KW-0687">Ribonucleoprotein</keyword>
<keyword id="KW-0689">Ribosomal protein</keyword>
<keyword id="KW-0694">RNA-binding</keyword>
<keyword id="KW-0699">rRNA-binding</keyword>
<feature type="chain" id="PRO_1000055605" description="Large ribosomal subunit protein uL14">
    <location>
        <begin position="1"/>
        <end position="122"/>
    </location>
</feature>
<proteinExistence type="inferred from homology"/>
<dbReference type="EMBL" id="CP000412">
    <property type="protein sequence ID" value="ABJ58017.1"/>
    <property type="molecule type" value="Genomic_DNA"/>
</dbReference>
<dbReference type="RefSeq" id="WP_002878195.1">
    <property type="nucleotide sequence ID" value="NC_008529.1"/>
</dbReference>
<dbReference type="SMR" id="Q04C05"/>
<dbReference type="GeneID" id="69668436"/>
<dbReference type="KEGG" id="lbu:LBUL_0360"/>
<dbReference type="HOGENOM" id="CLU_095071_2_1_9"/>
<dbReference type="BioCyc" id="LDEL321956:LBUL_RS01685-MONOMER"/>
<dbReference type="GO" id="GO:0022625">
    <property type="term" value="C:cytosolic large ribosomal subunit"/>
    <property type="evidence" value="ECO:0007669"/>
    <property type="project" value="TreeGrafter"/>
</dbReference>
<dbReference type="GO" id="GO:0070180">
    <property type="term" value="F:large ribosomal subunit rRNA binding"/>
    <property type="evidence" value="ECO:0007669"/>
    <property type="project" value="TreeGrafter"/>
</dbReference>
<dbReference type="GO" id="GO:0003735">
    <property type="term" value="F:structural constituent of ribosome"/>
    <property type="evidence" value="ECO:0007669"/>
    <property type="project" value="InterPro"/>
</dbReference>
<dbReference type="GO" id="GO:0006412">
    <property type="term" value="P:translation"/>
    <property type="evidence" value="ECO:0007669"/>
    <property type="project" value="UniProtKB-UniRule"/>
</dbReference>
<dbReference type="CDD" id="cd00337">
    <property type="entry name" value="Ribosomal_uL14"/>
    <property type="match status" value="1"/>
</dbReference>
<dbReference type="FunFam" id="2.40.150.20:FF:000001">
    <property type="entry name" value="50S ribosomal protein L14"/>
    <property type="match status" value="1"/>
</dbReference>
<dbReference type="Gene3D" id="2.40.150.20">
    <property type="entry name" value="Ribosomal protein L14"/>
    <property type="match status" value="1"/>
</dbReference>
<dbReference type="HAMAP" id="MF_01367">
    <property type="entry name" value="Ribosomal_uL14"/>
    <property type="match status" value="1"/>
</dbReference>
<dbReference type="InterPro" id="IPR000218">
    <property type="entry name" value="Ribosomal_uL14"/>
</dbReference>
<dbReference type="InterPro" id="IPR005745">
    <property type="entry name" value="Ribosomal_uL14_bac-type"/>
</dbReference>
<dbReference type="InterPro" id="IPR019972">
    <property type="entry name" value="Ribosomal_uL14_CS"/>
</dbReference>
<dbReference type="InterPro" id="IPR036853">
    <property type="entry name" value="Ribosomal_uL14_sf"/>
</dbReference>
<dbReference type="NCBIfam" id="TIGR01067">
    <property type="entry name" value="rplN_bact"/>
    <property type="match status" value="1"/>
</dbReference>
<dbReference type="PANTHER" id="PTHR11761">
    <property type="entry name" value="50S/60S RIBOSOMAL PROTEIN L14/L23"/>
    <property type="match status" value="1"/>
</dbReference>
<dbReference type="PANTHER" id="PTHR11761:SF3">
    <property type="entry name" value="LARGE RIBOSOMAL SUBUNIT PROTEIN UL14M"/>
    <property type="match status" value="1"/>
</dbReference>
<dbReference type="Pfam" id="PF00238">
    <property type="entry name" value="Ribosomal_L14"/>
    <property type="match status" value="1"/>
</dbReference>
<dbReference type="SMART" id="SM01374">
    <property type="entry name" value="Ribosomal_L14"/>
    <property type="match status" value="1"/>
</dbReference>
<dbReference type="SUPFAM" id="SSF50193">
    <property type="entry name" value="Ribosomal protein L14"/>
    <property type="match status" value="1"/>
</dbReference>
<dbReference type="PROSITE" id="PS00049">
    <property type="entry name" value="RIBOSOMAL_L14"/>
    <property type="match status" value="1"/>
</dbReference>
<sequence>MIQTETRLKVADNSGARELLVIRVMGGSKRKTGNIGDIVVAAVKQATPGGVVKKGDVVKAVIVRTKSGARREDGSYIKFDENAAVIINADKSPRGTRIFGPVARELREGDFMKIVSLAPEVL</sequence>
<evidence type="ECO:0000255" key="1">
    <source>
        <dbReference type="HAMAP-Rule" id="MF_01367"/>
    </source>
</evidence>
<evidence type="ECO:0000305" key="2"/>
<organism>
    <name type="scientific">Lactobacillus delbrueckii subsp. bulgaricus (strain ATCC BAA-365 / Lb-18)</name>
    <dbReference type="NCBI Taxonomy" id="321956"/>
    <lineage>
        <taxon>Bacteria</taxon>
        <taxon>Bacillati</taxon>
        <taxon>Bacillota</taxon>
        <taxon>Bacilli</taxon>
        <taxon>Lactobacillales</taxon>
        <taxon>Lactobacillaceae</taxon>
        <taxon>Lactobacillus</taxon>
    </lineage>
</organism>
<accession>Q04C05</accession>
<name>RL14_LACDB</name>
<gene>
    <name evidence="1" type="primary">rplN</name>
    <name type="ordered locus">LBUL_0360</name>
</gene>
<comment type="function">
    <text evidence="1">Binds to 23S rRNA. Forms part of two intersubunit bridges in the 70S ribosome.</text>
</comment>
<comment type="subunit">
    <text evidence="1">Part of the 50S ribosomal subunit. Forms a cluster with proteins L3 and L19. In the 70S ribosome, L14 and L19 interact and together make contacts with the 16S rRNA in bridges B5 and B8.</text>
</comment>
<comment type="similarity">
    <text evidence="1">Belongs to the universal ribosomal protein uL14 family.</text>
</comment>
<protein>
    <recommendedName>
        <fullName evidence="1">Large ribosomal subunit protein uL14</fullName>
    </recommendedName>
    <alternativeName>
        <fullName evidence="2">50S ribosomal protein L14</fullName>
    </alternativeName>
</protein>